<name>Y117_BUCBP</name>
<gene>
    <name type="ordered locus">bbp_117</name>
</gene>
<dbReference type="EMBL" id="AE016826">
    <property type="protein sequence ID" value="AAO26851.1"/>
    <property type="molecule type" value="Genomic_DNA"/>
</dbReference>
<dbReference type="RefSeq" id="WP_011091252.1">
    <property type="nucleotide sequence ID" value="NC_004545.1"/>
</dbReference>
<dbReference type="SMR" id="Q89AW1"/>
<dbReference type="STRING" id="224915.bbp_117"/>
<dbReference type="KEGG" id="bab:bbp_117"/>
<dbReference type="eggNOG" id="COG0628">
    <property type="taxonomic scope" value="Bacteria"/>
</dbReference>
<dbReference type="HOGENOM" id="CLU_041771_1_1_6"/>
<dbReference type="OrthoDB" id="5298283at2"/>
<dbReference type="Proteomes" id="UP000000601">
    <property type="component" value="Chromosome"/>
</dbReference>
<dbReference type="GO" id="GO:0005886">
    <property type="term" value="C:plasma membrane"/>
    <property type="evidence" value="ECO:0007669"/>
    <property type="project" value="UniProtKB-SubCell"/>
</dbReference>
<dbReference type="InterPro" id="IPR002549">
    <property type="entry name" value="AI-2E-like"/>
</dbReference>
<dbReference type="NCBIfam" id="NF008216">
    <property type="entry name" value="PRK10983.1"/>
    <property type="match status" value="1"/>
</dbReference>
<dbReference type="PANTHER" id="PTHR21716">
    <property type="entry name" value="TRANSMEMBRANE PROTEIN"/>
    <property type="match status" value="1"/>
</dbReference>
<dbReference type="PANTHER" id="PTHR21716:SF67">
    <property type="entry name" value="TRANSPORT PROTEIN YDIK-RELATED"/>
    <property type="match status" value="1"/>
</dbReference>
<dbReference type="Pfam" id="PF01594">
    <property type="entry name" value="AI-2E_transport"/>
    <property type="match status" value="1"/>
</dbReference>
<comment type="subcellular location">
    <subcellularLocation>
        <location evidence="2">Cell membrane</location>
        <topology evidence="2">Multi-pass membrane protein</topology>
    </subcellularLocation>
</comment>
<comment type="similarity">
    <text evidence="2">Belongs to the autoinducer-2 exporter (AI-2E) (TC 2.A.86) family.</text>
</comment>
<reference key="1">
    <citation type="journal article" date="2003" name="Proc. Natl. Acad. Sci. U.S.A.">
        <title>Reductive genome evolution in Buchnera aphidicola.</title>
        <authorList>
            <person name="van Ham R.C.H.J."/>
            <person name="Kamerbeek J."/>
            <person name="Palacios C."/>
            <person name="Rausell C."/>
            <person name="Abascal F."/>
            <person name="Bastolla U."/>
            <person name="Fernandez J.M."/>
            <person name="Jimenez L."/>
            <person name="Postigo M."/>
            <person name="Silva F.J."/>
            <person name="Tamames J."/>
            <person name="Viguera E."/>
            <person name="Latorre A."/>
            <person name="Valencia A."/>
            <person name="Moran F."/>
            <person name="Moya A."/>
        </authorList>
    </citation>
    <scope>NUCLEOTIDE SEQUENCE [LARGE SCALE GENOMIC DNA]</scope>
    <source>
        <strain>Bp</strain>
    </source>
</reference>
<organism>
    <name type="scientific">Buchnera aphidicola subsp. Baizongia pistaciae (strain Bp)</name>
    <dbReference type="NCBI Taxonomy" id="224915"/>
    <lineage>
        <taxon>Bacteria</taxon>
        <taxon>Pseudomonadati</taxon>
        <taxon>Pseudomonadota</taxon>
        <taxon>Gammaproteobacteria</taxon>
        <taxon>Enterobacterales</taxon>
        <taxon>Erwiniaceae</taxon>
        <taxon>Buchnera</taxon>
    </lineage>
</organism>
<evidence type="ECO:0000255" key="1"/>
<evidence type="ECO:0000305" key="2"/>
<sequence length="368" mass="40909">MQNPREGMDLPQVIFSLVFIFIMIISSLWIMRPFFLGFAWASMVVVATWPIFLKLQILLWGNRACAVVMMTFSLLLVFIIPIVCLVNSLIDNSTSVISWLSSDKFRFPSLEWLQDIPIIGIKLFSSYQKLLNEGGAELITKVQPYMGKTTEFFVIQAGHFGRFILHLIFMLIFSALLYWNGEKVQSVIRHFAIRLGSKSGDSVVLLAGQAIRAVALGVVVTALVQGILSGIGLAISGIPYSSLLMMLIIIFCLVQLGPLPVLIPAIIWLYWNGKTTWGTVLLIWSCVVCILDHILRPILIRIGVDLPTVLILSGVIGGLIAFGMIGLFIGPVVLIISYRLISSWMDEIPAPNSLSKKSVQQLLFKKKN</sequence>
<proteinExistence type="inferred from homology"/>
<accession>Q89AW1</accession>
<keyword id="KW-1003">Cell membrane</keyword>
<keyword id="KW-0472">Membrane</keyword>
<keyword id="KW-1185">Reference proteome</keyword>
<keyword id="KW-0812">Transmembrane</keyword>
<keyword id="KW-1133">Transmembrane helix</keyword>
<keyword id="KW-0813">Transport</keyword>
<feature type="chain" id="PRO_0000148314" description="Putative transport protein bbp_117">
    <location>
        <begin position="1"/>
        <end position="368"/>
    </location>
</feature>
<feature type="transmembrane region" description="Helical" evidence="1">
    <location>
        <begin position="13"/>
        <end position="35"/>
    </location>
</feature>
<feature type="transmembrane region" description="Helical" evidence="1">
    <location>
        <begin position="39"/>
        <end position="61"/>
    </location>
</feature>
<feature type="transmembrane region" description="Helical" evidence="1">
    <location>
        <begin position="68"/>
        <end position="90"/>
    </location>
</feature>
<feature type="transmembrane region" description="Helical" evidence="1">
    <location>
        <begin position="159"/>
        <end position="181"/>
    </location>
</feature>
<feature type="transmembrane region" description="Helical" evidence="1">
    <location>
        <begin position="216"/>
        <end position="238"/>
    </location>
</feature>
<feature type="transmembrane region" description="Helical" evidence="1">
    <location>
        <begin position="248"/>
        <end position="270"/>
    </location>
</feature>
<feature type="transmembrane region" description="Helical" evidence="1">
    <location>
        <begin position="277"/>
        <end position="299"/>
    </location>
</feature>
<feature type="transmembrane region" description="Helical" evidence="1">
    <location>
        <begin position="314"/>
        <end position="336"/>
    </location>
</feature>
<protein>
    <recommendedName>
        <fullName>Putative transport protein bbp_117</fullName>
    </recommendedName>
</protein>